<organism>
    <name type="scientific">Chlorobaculum tepidum (strain ATCC 49652 / DSM 12025 / NBRC 103806 / TLS)</name>
    <name type="common">Chlorobium tepidum</name>
    <dbReference type="NCBI Taxonomy" id="194439"/>
    <lineage>
        <taxon>Bacteria</taxon>
        <taxon>Pseudomonadati</taxon>
        <taxon>Chlorobiota</taxon>
        <taxon>Chlorobiia</taxon>
        <taxon>Chlorobiales</taxon>
        <taxon>Chlorobiaceae</taxon>
        <taxon>Chlorobaculum</taxon>
    </lineage>
</organism>
<protein>
    <recommendedName>
        <fullName evidence="1">Putative pterin-4-alpha-carbinolamine dehydratase</fullName>
        <shortName evidence="1">PHS</shortName>
        <ecNumber evidence="1">4.2.1.96</ecNumber>
    </recommendedName>
    <alternativeName>
        <fullName evidence="1">4-alpha-hydroxy-tetrahydropterin dehydratase</fullName>
    </alternativeName>
    <alternativeName>
        <fullName evidence="1">Pterin carbinolamine dehydratase</fullName>
        <shortName evidence="1">PCD</shortName>
    </alternativeName>
</protein>
<dbReference type="EC" id="4.2.1.96" evidence="1"/>
<dbReference type="EMBL" id="AE006470">
    <property type="protein sequence ID" value="AAM71588.1"/>
    <property type="molecule type" value="Genomic_DNA"/>
</dbReference>
<dbReference type="RefSeq" id="NP_661246.1">
    <property type="nucleotide sequence ID" value="NC_002932.3"/>
</dbReference>
<dbReference type="RefSeq" id="WP_010932034.1">
    <property type="nucleotide sequence ID" value="NC_002932.3"/>
</dbReference>
<dbReference type="SMR" id="Q8KFI4"/>
<dbReference type="STRING" id="194439.CT0342"/>
<dbReference type="EnsemblBacteria" id="AAM71588">
    <property type="protein sequence ID" value="AAM71588"/>
    <property type="gene ID" value="CT0342"/>
</dbReference>
<dbReference type="KEGG" id="cte:CT0342"/>
<dbReference type="PATRIC" id="fig|194439.7.peg.331"/>
<dbReference type="eggNOG" id="COG2154">
    <property type="taxonomic scope" value="Bacteria"/>
</dbReference>
<dbReference type="HOGENOM" id="CLU_081974_2_2_10"/>
<dbReference type="OrthoDB" id="9800108at2"/>
<dbReference type="Proteomes" id="UP000001007">
    <property type="component" value="Chromosome"/>
</dbReference>
<dbReference type="GO" id="GO:0008124">
    <property type="term" value="F:4-alpha-hydroxytetrahydrobiopterin dehydratase activity"/>
    <property type="evidence" value="ECO:0007669"/>
    <property type="project" value="UniProtKB-UniRule"/>
</dbReference>
<dbReference type="GO" id="GO:0006729">
    <property type="term" value="P:tetrahydrobiopterin biosynthetic process"/>
    <property type="evidence" value="ECO:0007669"/>
    <property type="project" value="InterPro"/>
</dbReference>
<dbReference type="CDD" id="cd00913">
    <property type="entry name" value="PCD_DCoH_subfamily_a"/>
    <property type="match status" value="1"/>
</dbReference>
<dbReference type="Gene3D" id="3.30.1360.20">
    <property type="entry name" value="Transcriptional coactivator/pterin dehydratase"/>
    <property type="match status" value="1"/>
</dbReference>
<dbReference type="HAMAP" id="MF_00434">
    <property type="entry name" value="Pterin_4_alpha"/>
    <property type="match status" value="1"/>
</dbReference>
<dbReference type="InterPro" id="IPR036428">
    <property type="entry name" value="PCD_sf"/>
</dbReference>
<dbReference type="InterPro" id="IPR050376">
    <property type="entry name" value="Pterin-4-alpha-carb_dehyd"/>
</dbReference>
<dbReference type="InterPro" id="IPR001533">
    <property type="entry name" value="Pterin_deHydtase"/>
</dbReference>
<dbReference type="NCBIfam" id="NF002016">
    <property type="entry name" value="PRK00823.1-1"/>
    <property type="match status" value="1"/>
</dbReference>
<dbReference type="PANTHER" id="PTHR42805">
    <property type="entry name" value="PTERIN-4-ALPHA-CARBINOLAMINE DEHYDRATASE-RELATED"/>
    <property type="match status" value="1"/>
</dbReference>
<dbReference type="PANTHER" id="PTHR42805:SF1">
    <property type="entry name" value="PTERIN-4-ALPHA-CARBINOLAMINE DEHYDRATASE-RELATED"/>
    <property type="match status" value="1"/>
</dbReference>
<dbReference type="Pfam" id="PF01329">
    <property type="entry name" value="Pterin_4a"/>
    <property type="match status" value="1"/>
</dbReference>
<dbReference type="SUPFAM" id="SSF55248">
    <property type="entry name" value="PCD-like"/>
    <property type="match status" value="1"/>
</dbReference>
<gene>
    <name type="ordered locus">CT0342</name>
</gene>
<reference key="1">
    <citation type="journal article" date="2002" name="Proc. Natl. Acad. Sci. U.S.A.">
        <title>The complete genome sequence of Chlorobium tepidum TLS, a photosynthetic, anaerobic, green-sulfur bacterium.</title>
        <authorList>
            <person name="Eisen J.A."/>
            <person name="Nelson K.E."/>
            <person name="Paulsen I.T."/>
            <person name="Heidelberg J.F."/>
            <person name="Wu M."/>
            <person name="Dodson R.J."/>
            <person name="DeBoy R.T."/>
            <person name="Gwinn M.L."/>
            <person name="Nelson W.C."/>
            <person name="Haft D.H."/>
            <person name="Hickey E.K."/>
            <person name="Peterson J.D."/>
            <person name="Durkin A.S."/>
            <person name="Kolonay J.F."/>
            <person name="Yang F."/>
            <person name="Holt I.E."/>
            <person name="Umayam L.A."/>
            <person name="Mason T.M."/>
            <person name="Brenner M."/>
            <person name="Shea T.P."/>
            <person name="Parksey D.S."/>
            <person name="Nierman W.C."/>
            <person name="Feldblyum T.V."/>
            <person name="Hansen C.L."/>
            <person name="Craven M.B."/>
            <person name="Radune D."/>
            <person name="Vamathevan J.J."/>
            <person name="Khouri H.M."/>
            <person name="White O."/>
            <person name="Gruber T.M."/>
            <person name="Ketchum K.A."/>
            <person name="Venter J.C."/>
            <person name="Tettelin H."/>
            <person name="Bryant D.A."/>
            <person name="Fraser C.M."/>
        </authorList>
    </citation>
    <scope>NUCLEOTIDE SEQUENCE [LARGE SCALE GENOMIC DNA]</scope>
    <source>
        <strain>ATCC 49652 / DSM 12025 / NBRC 103806 / TLS</strain>
    </source>
</reference>
<keyword id="KW-0456">Lyase</keyword>
<keyword id="KW-1185">Reference proteome</keyword>
<accession>Q8KFI4</accession>
<evidence type="ECO:0000255" key="1">
    <source>
        <dbReference type="HAMAP-Rule" id="MF_00434"/>
    </source>
</evidence>
<name>PHS_CHLTE</name>
<feature type="chain" id="PRO_0000063079" description="Putative pterin-4-alpha-carbinolamine dehydratase">
    <location>
        <begin position="1"/>
        <end position="111"/>
    </location>
</feature>
<sequence length="111" mass="12334">MTQLENKHCVPCEGTAAPMASEELQRQLSSLPEWTLVDDSGTSKLVRVFTFKDFQSALDFTNRVGQLAEAEGHHPALLTEWGKVTVSWWTHAIGGIHLNDVIMATKTEKLV</sequence>
<proteinExistence type="inferred from homology"/>
<comment type="catalytic activity">
    <reaction evidence="1">
        <text>(4aS,6R)-4a-hydroxy-L-erythro-5,6,7,8-tetrahydrobiopterin = (6R)-L-erythro-6,7-dihydrobiopterin + H2O</text>
        <dbReference type="Rhea" id="RHEA:11920"/>
        <dbReference type="ChEBI" id="CHEBI:15377"/>
        <dbReference type="ChEBI" id="CHEBI:15642"/>
        <dbReference type="ChEBI" id="CHEBI:43120"/>
        <dbReference type="EC" id="4.2.1.96"/>
    </reaction>
</comment>
<comment type="similarity">
    <text evidence="1">Belongs to the pterin-4-alpha-carbinolamine dehydratase family.</text>
</comment>